<name>OTC_CUPPJ</name>
<keyword id="KW-0028">Amino-acid biosynthesis</keyword>
<keyword id="KW-0055">Arginine biosynthesis</keyword>
<keyword id="KW-0963">Cytoplasm</keyword>
<keyword id="KW-0808">Transferase</keyword>
<evidence type="ECO:0000250" key="1"/>
<evidence type="ECO:0000255" key="2">
    <source>
        <dbReference type="HAMAP-Rule" id="MF_01109"/>
    </source>
</evidence>
<proteinExistence type="inferred from homology"/>
<reference key="1">
    <citation type="journal article" date="2010" name="PLoS ONE">
        <title>The complete multipartite genome sequence of Cupriavidus necator JMP134, a versatile pollutant degrader.</title>
        <authorList>
            <person name="Lykidis A."/>
            <person name="Perez-Pantoja D."/>
            <person name="Ledger T."/>
            <person name="Mavromatis K."/>
            <person name="Anderson I.J."/>
            <person name="Ivanova N.N."/>
            <person name="Hooper S.D."/>
            <person name="Lapidus A."/>
            <person name="Lucas S."/>
            <person name="Gonzalez B."/>
            <person name="Kyrpides N.C."/>
        </authorList>
    </citation>
    <scope>NUCLEOTIDE SEQUENCE [LARGE SCALE GENOMIC DNA]</scope>
    <source>
        <strain>JMP134 / LMG 1197</strain>
    </source>
</reference>
<feature type="chain" id="PRO_1000065113" description="Ornithine carbamoyltransferase">
    <location>
        <begin position="1"/>
        <end position="307"/>
    </location>
</feature>
<feature type="binding site" evidence="2">
    <location>
        <begin position="56"/>
        <end position="59"/>
    </location>
    <ligand>
        <name>carbamoyl phosphate</name>
        <dbReference type="ChEBI" id="CHEBI:58228"/>
    </ligand>
</feature>
<feature type="binding site" evidence="2">
    <location>
        <position position="83"/>
    </location>
    <ligand>
        <name>carbamoyl phosphate</name>
        <dbReference type="ChEBI" id="CHEBI:58228"/>
    </ligand>
</feature>
<feature type="binding site" evidence="2">
    <location>
        <position position="107"/>
    </location>
    <ligand>
        <name>carbamoyl phosphate</name>
        <dbReference type="ChEBI" id="CHEBI:58228"/>
    </ligand>
</feature>
<feature type="binding site" evidence="2">
    <location>
        <begin position="134"/>
        <end position="137"/>
    </location>
    <ligand>
        <name>carbamoyl phosphate</name>
        <dbReference type="ChEBI" id="CHEBI:58228"/>
    </ligand>
</feature>
<feature type="binding site" evidence="2">
    <location>
        <position position="165"/>
    </location>
    <ligand>
        <name>L-ornithine</name>
        <dbReference type="ChEBI" id="CHEBI:46911"/>
    </ligand>
</feature>
<feature type="binding site" evidence="2">
    <location>
        <position position="223"/>
    </location>
    <ligand>
        <name>L-ornithine</name>
        <dbReference type="ChEBI" id="CHEBI:46911"/>
    </ligand>
</feature>
<feature type="binding site" evidence="2">
    <location>
        <begin position="227"/>
        <end position="228"/>
    </location>
    <ligand>
        <name>L-ornithine</name>
        <dbReference type="ChEBI" id="CHEBI:46911"/>
    </ligand>
</feature>
<feature type="binding site" evidence="2">
    <location>
        <begin position="263"/>
        <end position="264"/>
    </location>
    <ligand>
        <name>carbamoyl phosphate</name>
        <dbReference type="ChEBI" id="CHEBI:58228"/>
    </ligand>
</feature>
<feature type="binding site" evidence="2">
    <location>
        <position position="291"/>
    </location>
    <ligand>
        <name>carbamoyl phosphate</name>
        <dbReference type="ChEBI" id="CHEBI:58228"/>
    </ligand>
</feature>
<organism>
    <name type="scientific">Cupriavidus pinatubonensis (strain JMP 134 / LMG 1197)</name>
    <name type="common">Cupriavidus necator (strain JMP 134)</name>
    <dbReference type="NCBI Taxonomy" id="264198"/>
    <lineage>
        <taxon>Bacteria</taxon>
        <taxon>Pseudomonadati</taxon>
        <taxon>Pseudomonadota</taxon>
        <taxon>Betaproteobacteria</taxon>
        <taxon>Burkholderiales</taxon>
        <taxon>Burkholderiaceae</taxon>
        <taxon>Cupriavidus</taxon>
    </lineage>
</organism>
<sequence>MSSTPIKHYLQFSDLTPDEYEYLLDRARILKAKFKNYETWHPLHDRTLAMIFEKNSTRTRLSFEAGIHQLGGHAVFLNTRDSQLGRGEPIEDAAQVISRMVDIIMIRTFGQDIIERFAAHSRVPVINGLTNEYHPCQVLADVFTYIEQRGSIRGKTVAWIGDANNMAYTWIQAAERLGFTFHFSAPPGYQLDPALVPASAAGQLKVFEDPLAACKGASLVTTDVWTSMGFEAENEARKRAFQNWMVTTAMMDRAEPDALFMHCLPAHRGEEVEAAVIDGPKSVVWDEAENRLHVQKALMEYLLCGRY</sequence>
<gene>
    <name evidence="2" type="primary">argF</name>
    <name type="ordered locus">Reut_A2763</name>
</gene>
<accession>Q46XK9</accession>
<dbReference type="EC" id="2.1.3.3" evidence="2"/>
<dbReference type="EMBL" id="CP000090">
    <property type="protein sequence ID" value="AAZ62124.1"/>
    <property type="molecule type" value="Genomic_DNA"/>
</dbReference>
<dbReference type="SMR" id="Q46XK9"/>
<dbReference type="STRING" id="264198.Reut_A2763"/>
<dbReference type="KEGG" id="reu:Reut_A2763"/>
<dbReference type="eggNOG" id="COG0078">
    <property type="taxonomic scope" value="Bacteria"/>
</dbReference>
<dbReference type="HOGENOM" id="CLU_043846_3_2_4"/>
<dbReference type="OrthoDB" id="9802587at2"/>
<dbReference type="UniPathway" id="UPA00068">
    <property type="reaction ID" value="UER00112"/>
</dbReference>
<dbReference type="GO" id="GO:0005737">
    <property type="term" value="C:cytoplasm"/>
    <property type="evidence" value="ECO:0007669"/>
    <property type="project" value="UniProtKB-SubCell"/>
</dbReference>
<dbReference type="GO" id="GO:0016597">
    <property type="term" value="F:amino acid binding"/>
    <property type="evidence" value="ECO:0007669"/>
    <property type="project" value="InterPro"/>
</dbReference>
<dbReference type="GO" id="GO:0004585">
    <property type="term" value="F:ornithine carbamoyltransferase activity"/>
    <property type="evidence" value="ECO:0007669"/>
    <property type="project" value="UniProtKB-UniRule"/>
</dbReference>
<dbReference type="GO" id="GO:0042450">
    <property type="term" value="P:arginine biosynthetic process via ornithine"/>
    <property type="evidence" value="ECO:0007669"/>
    <property type="project" value="TreeGrafter"/>
</dbReference>
<dbReference type="GO" id="GO:0019240">
    <property type="term" value="P:citrulline biosynthetic process"/>
    <property type="evidence" value="ECO:0007669"/>
    <property type="project" value="TreeGrafter"/>
</dbReference>
<dbReference type="GO" id="GO:0006526">
    <property type="term" value="P:L-arginine biosynthetic process"/>
    <property type="evidence" value="ECO:0007669"/>
    <property type="project" value="UniProtKB-UniPathway"/>
</dbReference>
<dbReference type="FunFam" id="3.40.50.1370:FF:000008">
    <property type="entry name" value="Ornithine carbamoyltransferase"/>
    <property type="match status" value="1"/>
</dbReference>
<dbReference type="Gene3D" id="3.40.50.1370">
    <property type="entry name" value="Aspartate/ornithine carbamoyltransferase"/>
    <property type="match status" value="2"/>
</dbReference>
<dbReference type="HAMAP" id="MF_01109">
    <property type="entry name" value="OTCase"/>
    <property type="match status" value="1"/>
</dbReference>
<dbReference type="InterPro" id="IPR006132">
    <property type="entry name" value="Asp/Orn_carbamoyltranf_P-bd"/>
</dbReference>
<dbReference type="InterPro" id="IPR006130">
    <property type="entry name" value="Asp/Orn_carbamoylTrfase"/>
</dbReference>
<dbReference type="InterPro" id="IPR036901">
    <property type="entry name" value="Asp/Orn_carbamoylTrfase_sf"/>
</dbReference>
<dbReference type="InterPro" id="IPR006131">
    <property type="entry name" value="Asp_carbamoyltransf_Asp/Orn-bd"/>
</dbReference>
<dbReference type="InterPro" id="IPR002292">
    <property type="entry name" value="Orn/put_carbamltrans"/>
</dbReference>
<dbReference type="InterPro" id="IPR024904">
    <property type="entry name" value="OTCase_ArgI"/>
</dbReference>
<dbReference type="NCBIfam" id="TIGR00658">
    <property type="entry name" value="orni_carb_tr"/>
    <property type="match status" value="1"/>
</dbReference>
<dbReference type="NCBIfam" id="NF001986">
    <property type="entry name" value="PRK00779.1"/>
    <property type="match status" value="1"/>
</dbReference>
<dbReference type="PANTHER" id="PTHR45753">
    <property type="entry name" value="ORNITHINE CARBAMOYLTRANSFERASE, MITOCHONDRIAL"/>
    <property type="match status" value="1"/>
</dbReference>
<dbReference type="PANTHER" id="PTHR45753:SF3">
    <property type="entry name" value="ORNITHINE TRANSCARBAMYLASE, MITOCHONDRIAL"/>
    <property type="match status" value="1"/>
</dbReference>
<dbReference type="Pfam" id="PF00185">
    <property type="entry name" value="OTCace"/>
    <property type="match status" value="1"/>
</dbReference>
<dbReference type="Pfam" id="PF02729">
    <property type="entry name" value="OTCace_N"/>
    <property type="match status" value="1"/>
</dbReference>
<dbReference type="PRINTS" id="PR00100">
    <property type="entry name" value="AOTCASE"/>
</dbReference>
<dbReference type="PRINTS" id="PR00102">
    <property type="entry name" value="OTCASE"/>
</dbReference>
<dbReference type="SUPFAM" id="SSF53671">
    <property type="entry name" value="Aspartate/ornithine carbamoyltransferase"/>
    <property type="match status" value="1"/>
</dbReference>
<dbReference type="PROSITE" id="PS00097">
    <property type="entry name" value="CARBAMOYLTRANSFERASE"/>
    <property type="match status" value="1"/>
</dbReference>
<protein>
    <recommendedName>
        <fullName evidence="2">Ornithine carbamoyltransferase</fullName>
        <shortName evidence="2">OTCase</shortName>
        <ecNumber evidence="2">2.1.3.3</ecNumber>
    </recommendedName>
</protein>
<comment type="function">
    <text evidence="1">Reversibly catalyzes the transfer of the carbamoyl group from carbamoyl phosphate (CP) to the N(epsilon) atom of ornithine (ORN) to produce L-citrulline.</text>
</comment>
<comment type="catalytic activity">
    <reaction evidence="2">
        <text>carbamoyl phosphate + L-ornithine = L-citrulline + phosphate + H(+)</text>
        <dbReference type="Rhea" id="RHEA:19513"/>
        <dbReference type="ChEBI" id="CHEBI:15378"/>
        <dbReference type="ChEBI" id="CHEBI:43474"/>
        <dbReference type="ChEBI" id="CHEBI:46911"/>
        <dbReference type="ChEBI" id="CHEBI:57743"/>
        <dbReference type="ChEBI" id="CHEBI:58228"/>
        <dbReference type="EC" id="2.1.3.3"/>
    </reaction>
</comment>
<comment type="pathway">
    <text evidence="2">Amino-acid biosynthesis; L-arginine biosynthesis; L-arginine from L-ornithine and carbamoyl phosphate: step 1/3.</text>
</comment>
<comment type="subcellular location">
    <subcellularLocation>
        <location evidence="2">Cytoplasm</location>
    </subcellularLocation>
</comment>
<comment type="similarity">
    <text evidence="2">Belongs to the aspartate/ornithine carbamoyltransferase superfamily. OTCase family.</text>
</comment>